<name>VOPP1_HUMAN</name>
<protein>
    <recommendedName>
        <fullName evidence="10">WW domain binding protein VOPP1</fullName>
    </recommendedName>
    <alternativeName>
        <fullName evidence="8">EGFR-coamplified and overexpressed protein</fullName>
        <shortName evidence="8">ECop</shortName>
    </alternativeName>
    <alternativeName>
        <fullName>Glioblastoma-amplified secreted protein</fullName>
    </alternativeName>
    <alternativeName>
        <fullName>Putative NF-kappa-B-activating protein 055N</fullName>
    </alternativeName>
    <alternativeName>
        <fullName>Vesicular, overexpressed in cancer, prosurvival protein 1</fullName>
    </alternativeName>
</protein>
<keyword id="KW-0025">Alternative splicing</keyword>
<keyword id="KW-0968">Cytoplasmic vesicle</keyword>
<keyword id="KW-0967">Endosome</keyword>
<keyword id="KW-0458">Lysosome</keyword>
<keyword id="KW-0472">Membrane</keyword>
<keyword id="KW-1267">Proteomics identification</keyword>
<keyword id="KW-1185">Reference proteome</keyword>
<keyword id="KW-0732">Signal</keyword>
<keyword id="KW-0804">Transcription</keyword>
<keyword id="KW-0805">Transcription regulation</keyword>
<keyword id="KW-0812">Transmembrane</keyword>
<keyword id="KW-1133">Transmembrane helix</keyword>
<dbReference type="EMBL" id="AL136610">
    <property type="protein sequence ID" value="CAB66545.1"/>
    <property type="molecule type" value="mRNA"/>
</dbReference>
<dbReference type="EMBL" id="AB097004">
    <property type="protein sequence ID" value="BAC77357.1"/>
    <property type="molecule type" value="mRNA"/>
</dbReference>
<dbReference type="EMBL" id="AK075391">
    <property type="protein sequence ID" value="BAC11590.1"/>
    <property type="molecule type" value="mRNA"/>
</dbReference>
<dbReference type="EMBL" id="AK092992">
    <property type="protein sequence ID" value="BAG52634.1"/>
    <property type="molecule type" value="mRNA"/>
</dbReference>
<dbReference type="EMBL" id="AK314338">
    <property type="protein sequence ID" value="BAG36981.1"/>
    <property type="molecule type" value="mRNA"/>
</dbReference>
<dbReference type="EMBL" id="AK315882">
    <property type="protein sequence ID" value="BAF98773.1"/>
    <property type="molecule type" value="mRNA"/>
</dbReference>
<dbReference type="EMBL" id="CR533483">
    <property type="protein sequence ID" value="CAG38514.1"/>
    <property type="molecule type" value="mRNA"/>
</dbReference>
<dbReference type="EMBL" id="AC073237">
    <property type="status" value="NOT_ANNOTATED_CDS"/>
    <property type="molecule type" value="Genomic_DNA"/>
</dbReference>
<dbReference type="EMBL" id="AC073347">
    <property type="status" value="NOT_ANNOTATED_CDS"/>
    <property type="molecule type" value="Genomic_DNA"/>
</dbReference>
<dbReference type="EMBL" id="AC099681">
    <property type="status" value="NOT_ANNOTATED_CDS"/>
    <property type="molecule type" value="Genomic_DNA"/>
</dbReference>
<dbReference type="EMBL" id="CH236957">
    <property type="protein sequence ID" value="EAL23811.1"/>
    <property type="molecule type" value="Genomic_DNA"/>
</dbReference>
<dbReference type="EMBL" id="CH471201">
    <property type="protein sequence ID" value="EAW50969.1"/>
    <property type="molecule type" value="Genomic_DNA"/>
</dbReference>
<dbReference type="EMBL" id="BC016650">
    <property type="protein sequence ID" value="AAH16650.1"/>
    <property type="molecule type" value="mRNA"/>
</dbReference>
<dbReference type="EMBL" id="AF395824">
    <property type="protein sequence ID" value="AAK82888.1"/>
    <property type="status" value="ALT_SEQ"/>
    <property type="molecule type" value="mRNA"/>
</dbReference>
<dbReference type="CCDS" id="CCDS47588.1">
    <molecule id="Q96AW1-1"/>
</dbReference>
<dbReference type="CCDS" id="CCDS64654.1">
    <molecule id="Q96AW1-2"/>
</dbReference>
<dbReference type="CCDS" id="CCDS64655.1">
    <molecule id="Q96AW1-3"/>
</dbReference>
<dbReference type="CCDS" id="CCDS64656.1">
    <molecule id="Q96AW1-4"/>
</dbReference>
<dbReference type="RefSeq" id="NP_001271211.1">
    <molecule id="Q96AW1-4"/>
    <property type="nucleotide sequence ID" value="NM_001284282.2"/>
</dbReference>
<dbReference type="RefSeq" id="NP_001271212.1">
    <molecule id="Q96AW1-3"/>
    <property type="nucleotide sequence ID" value="NM_001284283.2"/>
</dbReference>
<dbReference type="RefSeq" id="NP_001271213.1">
    <molecule id="Q96AW1-2"/>
    <property type="nucleotide sequence ID" value="NM_001284284.1"/>
</dbReference>
<dbReference type="RefSeq" id="NP_001308178.1">
    <property type="nucleotide sequence ID" value="NM_001321249.1"/>
</dbReference>
<dbReference type="RefSeq" id="NP_001308179.1">
    <property type="nucleotide sequence ID" value="NM_001321250.1"/>
</dbReference>
<dbReference type="RefSeq" id="NP_001308180.1">
    <property type="nucleotide sequence ID" value="NM_001321251.1"/>
</dbReference>
<dbReference type="RefSeq" id="NP_110423.3">
    <molecule id="Q96AW1-1"/>
    <property type="nucleotide sequence ID" value="NM_030796.4"/>
</dbReference>
<dbReference type="BioGRID" id="123516">
    <property type="interactions" value="12"/>
</dbReference>
<dbReference type="FunCoup" id="Q96AW1">
    <property type="interactions" value="154"/>
</dbReference>
<dbReference type="IntAct" id="Q96AW1">
    <property type="interactions" value="24"/>
</dbReference>
<dbReference type="STRING" id="9606.ENSP00000285279"/>
<dbReference type="iPTMnet" id="Q96AW1"/>
<dbReference type="PhosphoSitePlus" id="Q96AW1"/>
<dbReference type="SwissPalm" id="Q96AW1"/>
<dbReference type="BioMuta" id="VOPP1"/>
<dbReference type="DMDM" id="74760714"/>
<dbReference type="jPOST" id="Q96AW1"/>
<dbReference type="MassIVE" id="Q96AW1"/>
<dbReference type="PaxDb" id="9606-ENSP00000285279"/>
<dbReference type="PeptideAtlas" id="Q96AW1"/>
<dbReference type="ProteomicsDB" id="12027"/>
<dbReference type="ProteomicsDB" id="76001">
    <molecule id="Q96AW1-1"/>
</dbReference>
<dbReference type="ProteomicsDB" id="76002">
    <molecule id="Q96AW1-2"/>
</dbReference>
<dbReference type="ProteomicsDB" id="76003">
    <molecule id="Q96AW1-3"/>
</dbReference>
<dbReference type="Antibodypedia" id="27923">
    <property type="antibodies" value="118 antibodies from 20 providers"/>
</dbReference>
<dbReference type="DNASU" id="81552"/>
<dbReference type="Ensembl" id="ENST00000285279.10">
    <molecule id="Q96AW1-1"/>
    <property type="protein sequence ID" value="ENSP00000285279.5"/>
    <property type="gene ID" value="ENSG00000154978.13"/>
</dbReference>
<dbReference type="Ensembl" id="ENST00000418904.5">
    <molecule id="Q96AW1-4"/>
    <property type="protein sequence ID" value="ENSP00000393210.1"/>
    <property type="gene ID" value="ENSG00000154978.13"/>
</dbReference>
<dbReference type="Ensembl" id="ENST00000433959.5">
    <molecule id="Q96AW1-2"/>
    <property type="protein sequence ID" value="ENSP00000415230.1"/>
    <property type="gene ID" value="ENSG00000154978.13"/>
</dbReference>
<dbReference type="Ensembl" id="ENST00000625836.2">
    <molecule id="Q96AW1-3"/>
    <property type="protein sequence ID" value="ENSP00000486983.1"/>
    <property type="gene ID" value="ENSG00000154978.13"/>
</dbReference>
<dbReference type="GeneID" id="81552"/>
<dbReference type="KEGG" id="hsa:81552"/>
<dbReference type="MANE-Select" id="ENST00000285279.10">
    <property type="protein sequence ID" value="ENSP00000285279.5"/>
    <property type="RefSeq nucleotide sequence ID" value="NM_030796.5"/>
    <property type="RefSeq protein sequence ID" value="NP_110423.3"/>
</dbReference>
<dbReference type="UCSC" id="uc003tqq.5">
    <molecule id="Q96AW1-1"/>
    <property type="organism name" value="human"/>
</dbReference>
<dbReference type="AGR" id="HGNC:34518"/>
<dbReference type="CTD" id="81552"/>
<dbReference type="DisGeNET" id="81552"/>
<dbReference type="GeneCards" id="VOPP1"/>
<dbReference type="HGNC" id="HGNC:34518">
    <property type="gene designation" value="VOPP1"/>
</dbReference>
<dbReference type="HPA" id="ENSG00000154978">
    <property type="expression patterns" value="Tissue enhanced (retina)"/>
</dbReference>
<dbReference type="MIM" id="611915">
    <property type="type" value="gene"/>
</dbReference>
<dbReference type="neXtProt" id="NX_Q96AW1"/>
<dbReference type="OpenTargets" id="ENSG00000154978"/>
<dbReference type="PharmGKB" id="PA165618503"/>
<dbReference type="VEuPathDB" id="HostDB:ENSG00000154978"/>
<dbReference type="eggNOG" id="ENOG502RYIF">
    <property type="taxonomic scope" value="Eukaryota"/>
</dbReference>
<dbReference type="GeneTree" id="ENSGT00390000015821"/>
<dbReference type="HOGENOM" id="CLU_1694909_0_0_1"/>
<dbReference type="InParanoid" id="Q96AW1"/>
<dbReference type="OMA" id="FLECIEA"/>
<dbReference type="OrthoDB" id="6629737at2759"/>
<dbReference type="PAN-GO" id="Q96AW1">
    <property type="GO annotations" value="1 GO annotation based on evolutionary models"/>
</dbReference>
<dbReference type="PhylomeDB" id="Q96AW1"/>
<dbReference type="TreeFam" id="TF332098"/>
<dbReference type="PathwayCommons" id="Q96AW1"/>
<dbReference type="SignaLink" id="Q96AW1"/>
<dbReference type="BioGRID-ORCS" id="81552">
    <property type="hits" value="68 hits in 1156 CRISPR screens"/>
</dbReference>
<dbReference type="ChiTaRS" id="VOPP1">
    <property type="organism name" value="human"/>
</dbReference>
<dbReference type="GeneWiki" id="ECOP"/>
<dbReference type="GenomeRNAi" id="81552"/>
<dbReference type="Pharos" id="Q96AW1">
    <property type="development level" value="Tbio"/>
</dbReference>
<dbReference type="PRO" id="PR:Q96AW1"/>
<dbReference type="Proteomes" id="UP000005640">
    <property type="component" value="Chromosome 7"/>
</dbReference>
<dbReference type="RNAct" id="Q96AW1">
    <property type="molecule type" value="protein"/>
</dbReference>
<dbReference type="Bgee" id="ENSG00000154978">
    <property type="expression patterns" value="Expressed in thymus and 211 other cell types or tissues"/>
</dbReference>
<dbReference type="ExpressionAtlas" id="Q96AW1">
    <property type="expression patterns" value="baseline and differential"/>
</dbReference>
<dbReference type="GO" id="GO:0030659">
    <property type="term" value="C:cytoplasmic vesicle membrane"/>
    <property type="evidence" value="ECO:0000314"/>
    <property type="project" value="UniProtKB"/>
</dbReference>
<dbReference type="GO" id="GO:0005768">
    <property type="term" value="C:endosome"/>
    <property type="evidence" value="ECO:0000314"/>
    <property type="project" value="LIFEdb"/>
</dbReference>
<dbReference type="GO" id="GO:0005770">
    <property type="term" value="C:late endosome"/>
    <property type="evidence" value="ECO:0000314"/>
    <property type="project" value="UniProtKB"/>
</dbReference>
<dbReference type="GO" id="GO:0031902">
    <property type="term" value="C:late endosome membrane"/>
    <property type="evidence" value="ECO:0007669"/>
    <property type="project" value="UniProtKB-SubCell"/>
</dbReference>
<dbReference type="GO" id="GO:0005765">
    <property type="term" value="C:lysosomal membrane"/>
    <property type="evidence" value="ECO:0007669"/>
    <property type="project" value="UniProtKB-SubCell"/>
</dbReference>
<dbReference type="GO" id="GO:0005764">
    <property type="term" value="C:lysosome"/>
    <property type="evidence" value="ECO:0000314"/>
    <property type="project" value="UniProtKB"/>
</dbReference>
<dbReference type="GO" id="GO:0031090">
    <property type="term" value="C:organelle membrane"/>
    <property type="evidence" value="ECO:0000314"/>
    <property type="project" value="UniProtKB"/>
</dbReference>
<dbReference type="GO" id="GO:0019899">
    <property type="term" value="F:enzyme binding"/>
    <property type="evidence" value="ECO:0000353"/>
    <property type="project" value="UniProtKB"/>
</dbReference>
<dbReference type="InterPro" id="IPR026229">
    <property type="entry name" value="VOPP1"/>
</dbReference>
<dbReference type="PANTHER" id="PTHR14971">
    <property type="entry name" value="VESICULAR, OVEREXPRESSED IN CANCER, PROSURVIVAL PROTEIN 1"/>
    <property type="match status" value="1"/>
</dbReference>
<dbReference type="PANTHER" id="PTHR14971:SF2">
    <property type="entry name" value="VESICULAR, OVEREXPRESSED IN CANCER, PROSURVIVAL PROTEIN 1"/>
    <property type="match status" value="1"/>
</dbReference>
<dbReference type="PRINTS" id="PR02068">
    <property type="entry name" value="VOPPROTEIN1"/>
</dbReference>
<comment type="function">
    <text evidence="4 6">Increases the transcriptional activity of NFKB1 by facilitating its nuclear translocation, DNA-binding and associated apoptotic response, when overexpressed (PubMed:15735698). May sequester WWOX in lysosomal vesicles and thereby regulate WWOX role as tumor suppressor (PubMed:30285739).</text>
</comment>
<comment type="subunit">
    <text evidence="6">Interacts with WWOX (via WW domain).</text>
</comment>
<comment type="interaction">
    <interactant intactId="EBI-715058">
        <id>Q96AW1</id>
    </interactant>
    <interactant intactId="EBI-4320739">
        <id>Q9NZC7</id>
        <label>WWOX</label>
    </interactant>
    <organismsDiffer>false</organismsDiffer>
    <experiments>7</experiments>
</comment>
<comment type="subcellular location">
    <subcellularLocation>
        <location evidence="5">Cytoplasmic vesicle membrane</location>
        <topology evidence="5">Single-pass type I membrane protein</topology>
    </subcellularLocation>
    <subcellularLocation>
        <location evidence="6">Late endosome membrane</location>
        <topology evidence="6">Single-pass membrane protein</topology>
    </subcellularLocation>
    <subcellularLocation>
        <location evidence="6">Lysosome membrane</location>
        <topology evidence="6">Single-pass membrane protein</topology>
    </subcellularLocation>
    <text evidence="4">When overexpressed, localizes in the nucleus and perinuclear regions.</text>
</comment>
<comment type="alternative products">
    <event type="alternative splicing"/>
    <isoform>
        <id>Q96AW1-1</id>
        <name>1</name>
        <sequence type="displayed"/>
    </isoform>
    <isoform>
        <id>Q96AW1-2</id>
        <name>2</name>
        <sequence type="described" ref="VSP_043868"/>
    </isoform>
    <isoform>
        <id>Q96AW1-3</id>
        <name>3</name>
        <sequence type="described" ref="VSP_043867"/>
    </isoform>
    <isoform>
        <id>Q96AW1-4</id>
        <name>4</name>
        <sequence type="described" ref="VSP_055723"/>
    </isoform>
</comment>
<comment type="tissue specificity">
    <text evidence="3">Widely expressed with highest levels in thymus and ovary.</text>
</comment>
<comment type="similarity">
    <text evidence="9">Belongs to the VOPP1/ECOP family.</text>
</comment>
<comment type="sequence caution" evidence="9">
    <conflict type="erroneous translation">
        <sequence resource="EMBL-CDS" id="AAK82888"/>
    </conflict>
    <text>Wrong choice of frame.</text>
</comment>
<evidence type="ECO:0000255" key="1"/>
<evidence type="ECO:0000256" key="2">
    <source>
        <dbReference type="SAM" id="MobiDB-lite"/>
    </source>
</evidence>
<evidence type="ECO:0000269" key="3">
    <source>
    </source>
</evidence>
<evidence type="ECO:0000269" key="4">
    <source>
    </source>
</evidence>
<evidence type="ECO:0000269" key="5">
    <source>
    </source>
</evidence>
<evidence type="ECO:0000269" key="6">
    <source>
    </source>
</evidence>
<evidence type="ECO:0000303" key="7">
    <source>
    </source>
</evidence>
<evidence type="ECO:0000303" key="8">
    <source>
    </source>
</evidence>
<evidence type="ECO:0000305" key="9"/>
<evidence type="ECO:0000312" key="10">
    <source>
        <dbReference type="HGNC" id="HGNC:34518"/>
    </source>
</evidence>
<gene>
    <name evidence="10" type="primary">VOPP1</name>
    <name type="synonym">ECOP</name>
    <name type="synonym">GASP</name>
</gene>
<organism>
    <name type="scientific">Homo sapiens</name>
    <name type="common">Human</name>
    <dbReference type="NCBI Taxonomy" id="9606"/>
    <lineage>
        <taxon>Eukaryota</taxon>
        <taxon>Metazoa</taxon>
        <taxon>Chordata</taxon>
        <taxon>Craniata</taxon>
        <taxon>Vertebrata</taxon>
        <taxon>Euteleostomi</taxon>
        <taxon>Mammalia</taxon>
        <taxon>Eutheria</taxon>
        <taxon>Euarchontoglires</taxon>
        <taxon>Primates</taxon>
        <taxon>Haplorrhini</taxon>
        <taxon>Catarrhini</taxon>
        <taxon>Hominidae</taxon>
        <taxon>Homo</taxon>
    </lineage>
</organism>
<proteinExistence type="evidence at protein level"/>
<feature type="signal peptide" evidence="1">
    <location>
        <begin position="1"/>
        <end position="22"/>
    </location>
</feature>
<feature type="chain" id="PRO_0000325917" description="WW domain binding protein VOPP1">
    <location>
        <begin position="23"/>
        <end position="172"/>
    </location>
</feature>
<feature type="topological domain" description="Extracellular" evidence="1">
    <location>
        <begin position="23"/>
        <end position="60"/>
    </location>
</feature>
<feature type="transmembrane region" description="Helical" evidence="1">
    <location>
        <begin position="61"/>
        <end position="81"/>
    </location>
</feature>
<feature type="topological domain" description="Cytoplasmic" evidence="1">
    <location>
        <begin position="82"/>
        <end position="172"/>
    </location>
</feature>
<feature type="region of interest" description="Disordered" evidence="2">
    <location>
        <begin position="102"/>
        <end position="153"/>
    </location>
</feature>
<feature type="compositionally biased region" description="Pro residues" evidence="2">
    <location>
        <begin position="104"/>
        <end position="119"/>
    </location>
</feature>
<feature type="splice variant" id="VSP_055723" description="In isoform 4." evidence="9">
    <original>MRRQPAKVAALLLGLLLE</original>
    <variation>M</variation>
    <location>
        <begin position="1"/>
        <end position="18"/>
    </location>
</feature>
<feature type="splice variant" id="VSP_043867" description="In isoform 3." evidence="7">
    <original>RRQPAKVAALLLGLLLE</original>
    <variation>LSETLGYLSSVLLQ</variation>
    <location>
        <begin position="2"/>
        <end position="18"/>
    </location>
</feature>
<feature type="splice variant" id="VSP_043868" description="In isoform 2." evidence="7">
    <original>QPAKVAALLLGLLLE</original>
    <variation>TGSHAQ</variation>
    <location>
        <begin position="4"/>
        <end position="18"/>
    </location>
</feature>
<feature type="mutagenesis site" description="Does not affect binding to WWOX." evidence="6">
    <original>Y</original>
    <variation>A</variation>
    <location>
        <position position="119"/>
    </location>
</feature>
<feature type="mutagenesis site" description="Does not affect binding to WWOX." evidence="6">
    <original>Y</original>
    <variation>A</variation>
    <location>
        <position position="157"/>
    </location>
</feature>
<feature type="mutagenesis site" description="Reduces binding to WWOX." evidence="6">
    <original>Y</original>
    <variation>A</variation>
    <location>
        <position position="165"/>
    </location>
</feature>
<feature type="sequence conflict" description="In Ref. 4; CAG38514." evidence="9" ref="4">
    <original>E</original>
    <variation>K</variation>
    <location>
        <position position="92"/>
    </location>
</feature>
<feature type="sequence conflict" description="In Ref. 3; BAC11590." evidence="9" ref="3">
    <original>A</original>
    <variation>T</variation>
    <location>
        <position position="111"/>
    </location>
</feature>
<feature type="sequence conflict" description="In Ref. 2; CAB66545 and 4; CAG38514." evidence="9" ref="2 4">
    <original>M</original>
    <variation>T</variation>
    <location>
        <position position="134"/>
    </location>
</feature>
<accession>Q96AW1</accession>
<accession>B0AZU1</accession>
<accession>B2RAT4</accession>
<accession>B3KS72</accession>
<accession>C9JWR3</accession>
<accession>Q6FIE3</accession>
<accession>Q8NBN8</accession>
<accession>Q96RE5</accession>
<accession>Q9H0W4</accession>
<sequence>MRRQPAKVAALLLGLLLECTEAKKHCWYFEGLYPTYYICRSYEDCCGSRCCVRALSIQRLWYFWFLLMMGVLFCCGAGFFIRRRMYPPPLIEEPAFNVSYTRQPPNPGPGAQQPGPPYYTDPGGPGMNPVGNSMAMAFQVPPNSPQGSVACPPPPAYCNTPPPPYEQVVKAK</sequence>
<reference key="1">
    <citation type="journal article" date="2001" name="Genome Res.">
        <title>Towards a catalog of human genes and proteins: sequencing and analysis of 500 novel complete protein coding human cDNAs.</title>
        <authorList>
            <person name="Wiemann S."/>
            <person name="Weil B."/>
            <person name="Wellenreuther R."/>
            <person name="Gassenhuber J."/>
            <person name="Glassl S."/>
            <person name="Ansorge W."/>
            <person name="Boecher M."/>
            <person name="Bloecker H."/>
            <person name="Bauersachs S."/>
            <person name="Blum H."/>
            <person name="Lauber J."/>
            <person name="Duesterhoeft A."/>
            <person name="Beyer A."/>
            <person name="Koehrer K."/>
            <person name="Strack N."/>
            <person name="Mewes H.-W."/>
            <person name="Ottenwaelder B."/>
            <person name="Obermaier B."/>
            <person name="Tampe J."/>
            <person name="Heubner D."/>
            <person name="Wambutt R."/>
            <person name="Korn B."/>
            <person name="Klein M."/>
            <person name="Poustka A."/>
        </authorList>
    </citation>
    <scope>NUCLEOTIDE SEQUENCE [LARGE SCALE MRNA] (ISOFORM 1)</scope>
    <source>
        <tissue>Brain</tissue>
    </source>
</reference>
<reference key="2">
    <citation type="journal article" date="2003" name="Oncogene">
        <title>Large-scale identification and characterization of human genes that activate NF-kappaB and MAPK signaling pathways.</title>
        <authorList>
            <person name="Matsuda A."/>
            <person name="Suzuki Y."/>
            <person name="Honda G."/>
            <person name="Muramatsu S."/>
            <person name="Matsuzaki O."/>
            <person name="Nagano Y."/>
            <person name="Doi T."/>
            <person name="Shimotohno K."/>
            <person name="Harada T."/>
            <person name="Nishida E."/>
            <person name="Hayashi H."/>
            <person name="Sugano S."/>
        </authorList>
    </citation>
    <scope>NUCLEOTIDE SEQUENCE [LARGE SCALE MRNA] (ISOFORM 1)</scope>
    <source>
        <tissue>Lung fibroblast</tissue>
    </source>
</reference>
<reference key="3">
    <citation type="journal article" date="2004" name="Nat. Genet.">
        <title>Complete sequencing and characterization of 21,243 full-length human cDNAs.</title>
        <authorList>
            <person name="Ota T."/>
            <person name="Suzuki Y."/>
            <person name="Nishikawa T."/>
            <person name="Otsuki T."/>
            <person name="Sugiyama T."/>
            <person name="Irie R."/>
            <person name="Wakamatsu A."/>
            <person name="Hayashi K."/>
            <person name="Sato H."/>
            <person name="Nagai K."/>
            <person name="Kimura K."/>
            <person name="Makita H."/>
            <person name="Sekine M."/>
            <person name="Obayashi M."/>
            <person name="Nishi T."/>
            <person name="Shibahara T."/>
            <person name="Tanaka T."/>
            <person name="Ishii S."/>
            <person name="Yamamoto J."/>
            <person name="Saito K."/>
            <person name="Kawai Y."/>
            <person name="Isono Y."/>
            <person name="Nakamura Y."/>
            <person name="Nagahari K."/>
            <person name="Murakami K."/>
            <person name="Yasuda T."/>
            <person name="Iwayanagi T."/>
            <person name="Wagatsuma M."/>
            <person name="Shiratori A."/>
            <person name="Sudo H."/>
            <person name="Hosoiri T."/>
            <person name="Kaku Y."/>
            <person name="Kodaira H."/>
            <person name="Kondo H."/>
            <person name="Sugawara M."/>
            <person name="Takahashi M."/>
            <person name="Kanda K."/>
            <person name="Yokoi T."/>
            <person name="Furuya T."/>
            <person name="Kikkawa E."/>
            <person name="Omura Y."/>
            <person name="Abe K."/>
            <person name="Kamihara K."/>
            <person name="Katsuta N."/>
            <person name="Sato K."/>
            <person name="Tanikawa M."/>
            <person name="Yamazaki M."/>
            <person name="Ninomiya K."/>
            <person name="Ishibashi T."/>
            <person name="Yamashita H."/>
            <person name="Murakawa K."/>
            <person name="Fujimori K."/>
            <person name="Tanai H."/>
            <person name="Kimata M."/>
            <person name="Watanabe M."/>
            <person name="Hiraoka S."/>
            <person name="Chiba Y."/>
            <person name="Ishida S."/>
            <person name="Ono Y."/>
            <person name="Takiguchi S."/>
            <person name="Watanabe S."/>
            <person name="Yosida M."/>
            <person name="Hotuta T."/>
            <person name="Kusano J."/>
            <person name="Kanehori K."/>
            <person name="Takahashi-Fujii A."/>
            <person name="Hara H."/>
            <person name="Tanase T.-O."/>
            <person name="Nomura Y."/>
            <person name="Togiya S."/>
            <person name="Komai F."/>
            <person name="Hara R."/>
            <person name="Takeuchi K."/>
            <person name="Arita M."/>
            <person name="Imose N."/>
            <person name="Musashino K."/>
            <person name="Yuuki H."/>
            <person name="Oshima A."/>
            <person name="Sasaki N."/>
            <person name="Aotsuka S."/>
            <person name="Yoshikawa Y."/>
            <person name="Matsunawa H."/>
            <person name="Ichihara T."/>
            <person name="Shiohata N."/>
            <person name="Sano S."/>
            <person name="Moriya S."/>
            <person name="Momiyama H."/>
            <person name="Satoh N."/>
            <person name="Takami S."/>
            <person name="Terashima Y."/>
            <person name="Suzuki O."/>
            <person name="Nakagawa S."/>
            <person name="Senoh A."/>
            <person name="Mizoguchi H."/>
            <person name="Goto Y."/>
            <person name="Shimizu F."/>
            <person name="Wakebe H."/>
            <person name="Hishigaki H."/>
            <person name="Watanabe T."/>
            <person name="Sugiyama A."/>
            <person name="Takemoto M."/>
            <person name="Kawakami B."/>
            <person name="Yamazaki M."/>
            <person name="Watanabe K."/>
            <person name="Kumagai A."/>
            <person name="Itakura S."/>
            <person name="Fukuzumi Y."/>
            <person name="Fujimori Y."/>
            <person name="Komiyama M."/>
            <person name="Tashiro H."/>
            <person name="Tanigami A."/>
            <person name="Fujiwara T."/>
            <person name="Ono T."/>
            <person name="Yamada K."/>
            <person name="Fujii Y."/>
            <person name="Ozaki K."/>
            <person name="Hirao M."/>
            <person name="Ohmori Y."/>
            <person name="Kawabata A."/>
            <person name="Hikiji T."/>
            <person name="Kobatake N."/>
            <person name="Inagaki H."/>
            <person name="Ikema Y."/>
            <person name="Okamoto S."/>
            <person name="Okitani R."/>
            <person name="Kawakami T."/>
            <person name="Noguchi S."/>
            <person name="Itoh T."/>
            <person name="Shigeta K."/>
            <person name="Senba T."/>
            <person name="Matsumura K."/>
            <person name="Nakajima Y."/>
            <person name="Mizuno T."/>
            <person name="Morinaga M."/>
            <person name="Sasaki M."/>
            <person name="Togashi T."/>
            <person name="Oyama M."/>
            <person name="Hata H."/>
            <person name="Watanabe M."/>
            <person name="Komatsu T."/>
            <person name="Mizushima-Sugano J."/>
            <person name="Satoh T."/>
            <person name="Shirai Y."/>
            <person name="Takahashi Y."/>
            <person name="Nakagawa K."/>
            <person name="Okumura K."/>
            <person name="Nagase T."/>
            <person name="Nomura N."/>
            <person name="Kikuchi H."/>
            <person name="Masuho Y."/>
            <person name="Yamashita R."/>
            <person name="Nakai K."/>
            <person name="Yada T."/>
            <person name="Nakamura Y."/>
            <person name="Ohara O."/>
            <person name="Isogai T."/>
            <person name="Sugano S."/>
        </authorList>
    </citation>
    <scope>NUCLEOTIDE SEQUENCE [LARGE SCALE MRNA] (ISOFORMS 1; 2 AND 3)</scope>
    <source>
        <tissue>Spleen</tissue>
        <tissue>Synovial cell</tissue>
        <tissue>Umbilical cord blood</tissue>
    </source>
</reference>
<reference key="4">
    <citation type="submission" date="2004-06" db="EMBL/GenBank/DDBJ databases">
        <title>Cloning of human full open reading frames in Gateway(TM) system entry vector (pDONR201).</title>
        <authorList>
            <person name="Ebert L."/>
            <person name="Schick M."/>
            <person name="Neubert P."/>
            <person name="Schatten R."/>
            <person name="Henze S."/>
            <person name="Korn B."/>
        </authorList>
    </citation>
    <scope>NUCLEOTIDE SEQUENCE [LARGE SCALE MRNA] (ISOFORM 1)</scope>
</reference>
<reference key="5">
    <citation type="journal article" date="2003" name="Nature">
        <title>The DNA sequence of human chromosome 7.</title>
        <authorList>
            <person name="Hillier L.W."/>
            <person name="Fulton R.S."/>
            <person name="Fulton L.A."/>
            <person name="Graves T.A."/>
            <person name="Pepin K.H."/>
            <person name="Wagner-McPherson C."/>
            <person name="Layman D."/>
            <person name="Maas J."/>
            <person name="Jaeger S."/>
            <person name="Walker R."/>
            <person name="Wylie K."/>
            <person name="Sekhon M."/>
            <person name="Becker M.C."/>
            <person name="O'Laughlin M.D."/>
            <person name="Schaller M.E."/>
            <person name="Fewell G.A."/>
            <person name="Delehaunty K.D."/>
            <person name="Miner T.L."/>
            <person name="Nash W.E."/>
            <person name="Cordes M."/>
            <person name="Du H."/>
            <person name="Sun H."/>
            <person name="Edwards J."/>
            <person name="Bradshaw-Cordum H."/>
            <person name="Ali J."/>
            <person name="Andrews S."/>
            <person name="Isak A."/>
            <person name="Vanbrunt A."/>
            <person name="Nguyen C."/>
            <person name="Du F."/>
            <person name="Lamar B."/>
            <person name="Courtney L."/>
            <person name="Kalicki J."/>
            <person name="Ozersky P."/>
            <person name="Bielicki L."/>
            <person name="Scott K."/>
            <person name="Holmes A."/>
            <person name="Harkins R."/>
            <person name="Harris A."/>
            <person name="Strong C.M."/>
            <person name="Hou S."/>
            <person name="Tomlinson C."/>
            <person name="Dauphin-Kohlberg S."/>
            <person name="Kozlowicz-Reilly A."/>
            <person name="Leonard S."/>
            <person name="Rohlfing T."/>
            <person name="Rock S.M."/>
            <person name="Tin-Wollam A.-M."/>
            <person name="Abbott A."/>
            <person name="Minx P."/>
            <person name="Maupin R."/>
            <person name="Strowmatt C."/>
            <person name="Latreille P."/>
            <person name="Miller N."/>
            <person name="Johnson D."/>
            <person name="Murray J."/>
            <person name="Woessner J.P."/>
            <person name="Wendl M.C."/>
            <person name="Yang S.-P."/>
            <person name="Schultz B.R."/>
            <person name="Wallis J.W."/>
            <person name="Spieth J."/>
            <person name="Bieri T.A."/>
            <person name="Nelson J.O."/>
            <person name="Berkowicz N."/>
            <person name="Wohldmann P.E."/>
            <person name="Cook L.L."/>
            <person name="Hickenbotham M.T."/>
            <person name="Eldred J."/>
            <person name="Williams D."/>
            <person name="Bedell J.A."/>
            <person name="Mardis E.R."/>
            <person name="Clifton S.W."/>
            <person name="Chissoe S.L."/>
            <person name="Marra M.A."/>
            <person name="Raymond C."/>
            <person name="Haugen E."/>
            <person name="Gillett W."/>
            <person name="Zhou Y."/>
            <person name="James R."/>
            <person name="Phelps K."/>
            <person name="Iadanoto S."/>
            <person name="Bubb K."/>
            <person name="Simms E."/>
            <person name="Levy R."/>
            <person name="Clendenning J."/>
            <person name="Kaul R."/>
            <person name="Kent W.J."/>
            <person name="Furey T.S."/>
            <person name="Baertsch R.A."/>
            <person name="Brent M.R."/>
            <person name="Keibler E."/>
            <person name="Flicek P."/>
            <person name="Bork P."/>
            <person name="Suyama M."/>
            <person name="Bailey J.A."/>
            <person name="Portnoy M.E."/>
            <person name="Torrents D."/>
            <person name="Chinwalla A.T."/>
            <person name="Gish W.R."/>
            <person name="Eddy S.R."/>
            <person name="McPherson J.D."/>
            <person name="Olson M.V."/>
            <person name="Eichler E.E."/>
            <person name="Green E.D."/>
            <person name="Waterston R.H."/>
            <person name="Wilson R.K."/>
        </authorList>
    </citation>
    <scope>NUCLEOTIDE SEQUENCE [LARGE SCALE GENOMIC DNA]</scope>
</reference>
<reference key="6">
    <citation type="journal article" date="2003" name="Science">
        <title>Human chromosome 7: DNA sequence and biology.</title>
        <authorList>
            <person name="Scherer S.W."/>
            <person name="Cheung J."/>
            <person name="MacDonald J.R."/>
            <person name="Osborne L.R."/>
            <person name="Nakabayashi K."/>
            <person name="Herbrick J.-A."/>
            <person name="Carson A.R."/>
            <person name="Parker-Katiraee L."/>
            <person name="Skaug J."/>
            <person name="Khaja R."/>
            <person name="Zhang J."/>
            <person name="Hudek A.K."/>
            <person name="Li M."/>
            <person name="Haddad M."/>
            <person name="Duggan G.E."/>
            <person name="Fernandez B.A."/>
            <person name="Kanematsu E."/>
            <person name="Gentles S."/>
            <person name="Christopoulos C.C."/>
            <person name="Choufani S."/>
            <person name="Kwasnicka D."/>
            <person name="Zheng X.H."/>
            <person name="Lai Z."/>
            <person name="Nusskern D.R."/>
            <person name="Zhang Q."/>
            <person name="Gu Z."/>
            <person name="Lu F."/>
            <person name="Zeesman S."/>
            <person name="Nowaczyk M.J."/>
            <person name="Teshima I."/>
            <person name="Chitayat D."/>
            <person name="Shuman C."/>
            <person name="Weksberg R."/>
            <person name="Zackai E.H."/>
            <person name="Grebe T.A."/>
            <person name="Cox S.R."/>
            <person name="Kirkpatrick S.J."/>
            <person name="Rahman N."/>
            <person name="Friedman J.M."/>
            <person name="Heng H.H.Q."/>
            <person name="Pelicci P.G."/>
            <person name="Lo-Coco F."/>
            <person name="Belloni E."/>
            <person name="Shaffer L.G."/>
            <person name="Pober B."/>
            <person name="Morton C.C."/>
            <person name="Gusella J.F."/>
            <person name="Bruns G.A.P."/>
            <person name="Korf B.R."/>
            <person name="Quade B.J."/>
            <person name="Ligon A.H."/>
            <person name="Ferguson H."/>
            <person name="Higgins A.W."/>
            <person name="Leach N.T."/>
            <person name="Herrick S.R."/>
            <person name="Lemyre E."/>
            <person name="Farra C.G."/>
            <person name="Kim H.-G."/>
            <person name="Summers A.M."/>
            <person name="Gripp K.W."/>
            <person name="Roberts W."/>
            <person name="Szatmari P."/>
            <person name="Winsor E.J.T."/>
            <person name="Grzeschik K.-H."/>
            <person name="Teebi A."/>
            <person name="Minassian B.A."/>
            <person name="Kere J."/>
            <person name="Armengol L."/>
            <person name="Pujana M.A."/>
            <person name="Estivill X."/>
            <person name="Wilson M.D."/>
            <person name="Koop B.F."/>
            <person name="Tosi S."/>
            <person name="Moore G.E."/>
            <person name="Boright A.P."/>
            <person name="Zlotorynski E."/>
            <person name="Kerem B."/>
            <person name="Kroisel P.M."/>
            <person name="Petek E."/>
            <person name="Oscier D.G."/>
            <person name="Mould S.J."/>
            <person name="Doehner H."/>
            <person name="Doehner K."/>
            <person name="Rommens J.M."/>
            <person name="Vincent J.B."/>
            <person name="Venter J.C."/>
            <person name="Li P.W."/>
            <person name="Mural R.J."/>
            <person name="Adams M.D."/>
            <person name="Tsui L.-C."/>
        </authorList>
    </citation>
    <scope>NUCLEOTIDE SEQUENCE [LARGE SCALE GENOMIC DNA]</scope>
</reference>
<reference key="7">
    <citation type="submission" date="2005-07" db="EMBL/GenBank/DDBJ databases">
        <authorList>
            <person name="Mural R.J."/>
            <person name="Istrail S."/>
            <person name="Sutton G.G."/>
            <person name="Florea L."/>
            <person name="Halpern A.L."/>
            <person name="Mobarry C.M."/>
            <person name="Lippert R."/>
            <person name="Walenz B."/>
            <person name="Shatkay H."/>
            <person name="Dew I."/>
            <person name="Miller J.R."/>
            <person name="Flanigan M.J."/>
            <person name="Edwards N.J."/>
            <person name="Bolanos R."/>
            <person name="Fasulo D."/>
            <person name="Halldorsson B.V."/>
            <person name="Hannenhalli S."/>
            <person name="Turner R."/>
            <person name="Yooseph S."/>
            <person name="Lu F."/>
            <person name="Nusskern D.R."/>
            <person name="Shue B.C."/>
            <person name="Zheng X.H."/>
            <person name="Zhong F."/>
            <person name="Delcher A.L."/>
            <person name="Huson D.H."/>
            <person name="Kravitz S.A."/>
            <person name="Mouchard L."/>
            <person name="Reinert K."/>
            <person name="Remington K.A."/>
            <person name="Clark A.G."/>
            <person name="Waterman M.S."/>
            <person name="Eichler E.E."/>
            <person name="Adams M.D."/>
            <person name="Hunkapiller M.W."/>
            <person name="Myers E.W."/>
            <person name="Venter J.C."/>
        </authorList>
    </citation>
    <scope>NUCLEOTIDE SEQUENCE [LARGE SCALE GENOMIC DNA]</scope>
</reference>
<reference key="8">
    <citation type="journal article" date="2004" name="Genome Res.">
        <title>The status, quality, and expansion of the NIH full-length cDNA project: the Mammalian Gene Collection (MGC).</title>
        <authorList>
            <consortium name="The MGC Project Team"/>
        </authorList>
    </citation>
    <scope>NUCLEOTIDE SEQUENCE [LARGE SCALE MRNA] (ISOFORM 1)</scope>
    <source>
        <tissue>Lymph</tissue>
    </source>
</reference>
<reference key="9">
    <citation type="journal article" date="2002" name="Neuro-oncol.">
        <title>A chromosomal region 7p11.2 transcript map: its development and application to the study of EGFR amplicons in glioblastoma.</title>
        <authorList>
            <person name="Eley G.D."/>
            <person name="Reiter J.L."/>
            <person name="Pandita A."/>
            <person name="Park S."/>
            <person name="Jenkins R.B."/>
            <person name="Maihle N.J."/>
            <person name="James C.D."/>
        </authorList>
    </citation>
    <scope>NUCLEOTIDE SEQUENCE [MRNA] OF 14-172 (ISOFORM 1)</scope>
    <scope>TISSUE SPECIFICITY</scope>
</reference>
<reference key="10">
    <citation type="journal article" date="2005" name="Oncogene">
        <title>ECop (EGFR-coamplified and overexpressed protein), a novel protein, regulates NF-kappaB transcriptional activity and associated apoptotic response in an IkappaBalpha-dependent manner.</title>
        <authorList>
            <person name="Park S."/>
            <person name="James C.D."/>
        </authorList>
    </citation>
    <scope>FUNCTION</scope>
</reference>
<reference key="11">
    <citation type="journal article" date="2010" name="J. Mol. Histol.">
        <title>Intracellular localization of GASP/ECOP/VOPP1.</title>
        <authorList>
            <person name="Baras A."/>
            <person name="Moskaluk C.A."/>
        </authorList>
    </citation>
    <scope>SUBCELLULAR LOCATION</scope>
</reference>
<reference key="12">
    <citation type="journal article" date="2018" name="BMC Biol.">
        <title>VOPP1 promotes breast tumorigenesis by interacting with the tumor suppressor WWOX.</title>
        <authorList>
            <person name="Bonin F."/>
            <person name="Taouis K."/>
            <person name="Azorin P."/>
            <person name="Petitalot A."/>
            <person name="Tariq Z."/>
            <person name="Nola S."/>
            <person name="Bouteille N."/>
            <person name="Tury S."/>
            <person name="Vacher S."/>
            <person name="Bieche I."/>
            <person name="Rais K.A."/>
            <person name="Pierron G."/>
            <person name="Fuhrmann L."/>
            <person name="Vincent-Salomon A."/>
            <person name="Formstecher E."/>
            <person name="Camonis J."/>
            <person name="Lidereau R."/>
            <person name="Lallemand F."/>
            <person name="Driouch K."/>
        </authorList>
    </citation>
    <scope>FUNCTION</scope>
    <scope>INTERACTION WITH WWOX</scope>
    <scope>SUBCELLULAR LOCATION</scope>
    <scope>MUTAGENESIS OF TYR-119; TYR-157 AND TYR-165</scope>
</reference>